<reference key="1">
    <citation type="journal article" date="2003" name="J. Bacteriol.">
        <title>Complete genome sequence of the oral pathogenic bacterium Porphyromonas gingivalis strain W83.</title>
        <authorList>
            <person name="Nelson K.E."/>
            <person name="Fleischmann R.D."/>
            <person name="DeBoy R.T."/>
            <person name="Paulsen I.T."/>
            <person name="Fouts D.E."/>
            <person name="Eisen J.A."/>
            <person name="Daugherty S.C."/>
            <person name="Dodson R.J."/>
            <person name="Durkin A.S."/>
            <person name="Gwinn M.L."/>
            <person name="Haft D.H."/>
            <person name="Kolonay J.F."/>
            <person name="Nelson W.C."/>
            <person name="Mason T.M."/>
            <person name="Tallon L."/>
            <person name="Gray J."/>
            <person name="Granger D."/>
            <person name="Tettelin H."/>
            <person name="Dong H."/>
            <person name="Galvin J.L."/>
            <person name="Duncan M.J."/>
            <person name="Dewhirst F.E."/>
            <person name="Fraser C.M."/>
        </authorList>
    </citation>
    <scope>NUCLEOTIDE SEQUENCE [LARGE SCALE GENOMIC DNA]</scope>
    <source>
        <strain>ATCC BAA-308 / W83</strain>
    </source>
</reference>
<sequence length="463" mass="52849">MIEQIGADSKSAENKQERKLYIETYGCQMNVADSEVVASVMQMDGYNLTDNVDEADTILVNTCSVRDNAEQKVLNRLAYYHSLRKKRRASSRLVIGVLGCMAERVKEELIREHHVDVVAGPDSYLDLPNLVGAAEQGEKAINVELSTQETYKDVMPLKMGGVHINGFVSIMRGCNNFCSYCIVPYTRGRERSREIESILNEVRDLKAKNFREVTLLGQNVNSYRYEQNGRIIRFPDLLAAVAEAVPDMRIRFTSPHPKDMDDEAIAVMARYRNICNHIHLPAQSGSDKMLRVMKRGYTRRWYLDRVAAIRRAIPDCAISSDLFCGFHSETEEDFEATLSLMEEVRYDSAFMFKYSERPGTYAARHLADDVPEEVKLSRLDRMIALQNRLSEESNKRDIGKTFEVLIEGFSKRSREQLFGRTQQNKVVIFDKNGHRVGQYIYVRIKDASSATLFGEVVETPTSE</sequence>
<name>MIAB_PORGI</name>
<evidence type="ECO:0000255" key="1">
    <source>
        <dbReference type="HAMAP-Rule" id="MF_01864"/>
    </source>
</evidence>
<evidence type="ECO:0000255" key="2">
    <source>
        <dbReference type="PROSITE-ProRule" id="PRU01266"/>
    </source>
</evidence>
<accession>Q7MAW4</accession>
<feature type="chain" id="PRO_0000374441" description="tRNA-2-methylthio-N(6)-dimethylallyladenosine synthase">
    <location>
        <begin position="1"/>
        <end position="463"/>
    </location>
</feature>
<feature type="domain" description="MTTase N-terminal" evidence="1">
    <location>
        <begin position="18"/>
        <end position="136"/>
    </location>
</feature>
<feature type="domain" description="Radical SAM core" evidence="2">
    <location>
        <begin position="160"/>
        <end position="392"/>
    </location>
</feature>
<feature type="domain" description="TRAM" evidence="1">
    <location>
        <begin position="395"/>
        <end position="458"/>
    </location>
</feature>
<feature type="binding site" evidence="1">
    <location>
        <position position="27"/>
    </location>
    <ligand>
        <name>[4Fe-4S] cluster</name>
        <dbReference type="ChEBI" id="CHEBI:49883"/>
        <label>1</label>
    </ligand>
</feature>
<feature type="binding site" evidence="1">
    <location>
        <position position="63"/>
    </location>
    <ligand>
        <name>[4Fe-4S] cluster</name>
        <dbReference type="ChEBI" id="CHEBI:49883"/>
        <label>1</label>
    </ligand>
</feature>
<feature type="binding site" evidence="1">
    <location>
        <position position="100"/>
    </location>
    <ligand>
        <name>[4Fe-4S] cluster</name>
        <dbReference type="ChEBI" id="CHEBI:49883"/>
        <label>1</label>
    </ligand>
</feature>
<feature type="binding site" evidence="1">
    <location>
        <position position="174"/>
    </location>
    <ligand>
        <name>[4Fe-4S] cluster</name>
        <dbReference type="ChEBI" id="CHEBI:49883"/>
        <label>2</label>
        <note>4Fe-4S-S-AdoMet</note>
    </ligand>
</feature>
<feature type="binding site" evidence="1">
    <location>
        <position position="178"/>
    </location>
    <ligand>
        <name>[4Fe-4S] cluster</name>
        <dbReference type="ChEBI" id="CHEBI:49883"/>
        <label>2</label>
        <note>4Fe-4S-S-AdoMet</note>
    </ligand>
</feature>
<feature type="binding site" evidence="1">
    <location>
        <position position="181"/>
    </location>
    <ligand>
        <name>[4Fe-4S] cluster</name>
        <dbReference type="ChEBI" id="CHEBI:49883"/>
        <label>2</label>
        <note>4Fe-4S-S-AdoMet</note>
    </ligand>
</feature>
<dbReference type="EC" id="2.8.4.3" evidence="1"/>
<dbReference type="EMBL" id="AE015924">
    <property type="protein sequence ID" value="AAQ66133.1"/>
    <property type="molecule type" value="Genomic_DNA"/>
</dbReference>
<dbReference type="RefSeq" id="WP_005874082.1">
    <property type="nucleotide sequence ID" value="NC_002950.2"/>
</dbReference>
<dbReference type="SMR" id="Q7MAW4"/>
<dbReference type="STRING" id="242619.PG_1012"/>
<dbReference type="EnsemblBacteria" id="AAQ66133">
    <property type="protein sequence ID" value="AAQ66133"/>
    <property type="gene ID" value="PG_1012"/>
</dbReference>
<dbReference type="KEGG" id="pgi:PG_1012"/>
<dbReference type="PATRIC" id="fig|242619.8.peg.936"/>
<dbReference type="eggNOG" id="COG0621">
    <property type="taxonomic scope" value="Bacteria"/>
</dbReference>
<dbReference type="HOGENOM" id="CLU_018697_2_0_10"/>
<dbReference type="BioCyc" id="PGIN242619:G1G02-942-MONOMER"/>
<dbReference type="Proteomes" id="UP000000588">
    <property type="component" value="Chromosome"/>
</dbReference>
<dbReference type="GO" id="GO:0005829">
    <property type="term" value="C:cytosol"/>
    <property type="evidence" value="ECO:0007669"/>
    <property type="project" value="TreeGrafter"/>
</dbReference>
<dbReference type="GO" id="GO:0051539">
    <property type="term" value="F:4 iron, 4 sulfur cluster binding"/>
    <property type="evidence" value="ECO:0007669"/>
    <property type="project" value="UniProtKB-UniRule"/>
</dbReference>
<dbReference type="GO" id="GO:0046872">
    <property type="term" value="F:metal ion binding"/>
    <property type="evidence" value="ECO:0007669"/>
    <property type="project" value="UniProtKB-KW"/>
</dbReference>
<dbReference type="GO" id="GO:0035597">
    <property type="term" value="F:N6-isopentenyladenosine methylthiotransferase activity"/>
    <property type="evidence" value="ECO:0007669"/>
    <property type="project" value="TreeGrafter"/>
</dbReference>
<dbReference type="CDD" id="cd01335">
    <property type="entry name" value="Radical_SAM"/>
    <property type="match status" value="1"/>
</dbReference>
<dbReference type="FunFam" id="3.40.50.12160:FF:000003">
    <property type="entry name" value="CDK5 regulatory subunit-associated protein 1"/>
    <property type="match status" value="1"/>
</dbReference>
<dbReference type="FunFam" id="3.80.30.20:FF:000001">
    <property type="entry name" value="tRNA-2-methylthio-N(6)-dimethylallyladenosine synthase 2"/>
    <property type="match status" value="1"/>
</dbReference>
<dbReference type="Gene3D" id="3.40.50.12160">
    <property type="entry name" value="Methylthiotransferase, N-terminal domain"/>
    <property type="match status" value="1"/>
</dbReference>
<dbReference type="Gene3D" id="2.40.50.140">
    <property type="entry name" value="Nucleic acid-binding proteins"/>
    <property type="match status" value="1"/>
</dbReference>
<dbReference type="Gene3D" id="3.80.30.20">
    <property type="entry name" value="tm_1862 like domain"/>
    <property type="match status" value="1"/>
</dbReference>
<dbReference type="HAMAP" id="MF_01864">
    <property type="entry name" value="tRNA_metthiotr_MiaB"/>
    <property type="match status" value="1"/>
</dbReference>
<dbReference type="InterPro" id="IPR006638">
    <property type="entry name" value="Elp3/MiaA/NifB-like_rSAM"/>
</dbReference>
<dbReference type="InterPro" id="IPR005839">
    <property type="entry name" value="Methylthiotransferase"/>
</dbReference>
<dbReference type="InterPro" id="IPR020612">
    <property type="entry name" value="Methylthiotransferase_CS"/>
</dbReference>
<dbReference type="InterPro" id="IPR013848">
    <property type="entry name" value="Methylthiotransferase_N"/>
</dbReference>
<dbReference type="InterPro" id="IPR038135">
    <property type="entry name" value="Methylthiotransferase_N_sf"/>
</dbReference>
<dbReference type="InterPro" id="IPR006463">
    <property type="entry name" value="MiaB_methiolase"/>
</dbReference>
<dbReference type="InterPro" id="IPR012340">
    <property type="entry name" value="NA-bd_OB-fold"/>
</dbReference>
<dbReference type="InterPro" id="IPR007197">
    <property type="entry name" value="rSAM"/>
</dbReference>
<dbReference type="InterPro" id="IPR023404">
    <property type="entry name" value="rSAM_horseshoe"/>
</dbReference>
<dbReference type="InterPro" id="IPR002792">
    <property type="entry name" value="TRAM_dom"/>
</dbReference>
<dbReference type="NCBIfam" id="TIGR01574">
    <property type="entry name" value="miaB-methiolase"/>
    <property type="match status" value="1"/>
</dbReference>
<dbReference type="NCBIfam" id="TIGR00089">
    <property type="entry name" value="MiaB/RimO family radical SAM methylthiotransferase"/>
    <property type="match status" value="1"/>
</dbReference>
<dbReference type="PANTHER" id="PTHR43020">
    <property type="entry name" value="CDK5 REGULATORY SUBUNIT-ASSOCIATED PROTEIN 1"/>
    <property type="match status" value="1"/>
</dbReference>
<dbReference type="PANTHER" id="PTHR43020:SF2">
    <property type="entry name" value="MITOCHONDRIAL TRNA METHYLTHIOTRANSFERASE CDK5RAP1"/>
    <property type="match status" value="1"/>
</dbReference>
<dbReference type="Pfam" id="PF04055">
    <property type="entry name" value="Radical_SAM"/>
    <property type="match status" value="1"/>
</dbReference>
<dbReference type="Pfam" id="PF01938">
    <property type="entry name" value="TRAM"/>
    <property type="match status" value="1"/>
</dbReference>
<dbReference type="Pfam" id="PF00919">
    <property type="entry name" value="UPF0004"/>
    <property type="match status" value="1"/>
</dbReference>
<dbReference type="SFLD" id="SFLDF00273">
    <property type="entry name" value="(dimethylallyl)adenosine_tRNA"/>
    <property type="match status" value="1"/>
</dbReference>
<dbReference type="SFLD" id="SFLDG01082">
    <property type="entry name" value="B12-binding_domain_containing"/>
    <property type="match status" value="1"/>
</dbReference>
<dbReference type="SFLD" id="SFLDF00413">
    <property type="entry name" value="CDK5RAP1"/>
    <property type="match status" value="1"/>
</dbReference>
<dbReference type="SFLD" id="SFLDG01061">
    <property type="entry name" value="methylthiotransferase"/>
    <property type="match status" value="1"/>
</dbReference>
<dbReference type="SMART" id="SM00729">
    <property type="entry name" value="Elp3"/>
    <property type="match status" value="1"/>
</dbReference>
<dbReference type="SUPFAM" id="SSF102114">
    <property type="entry name" value="Radical SAM enzymes"/>
    <property type="match status" value="1"/>
</dbReference>
<dbReference type="PROSITE" id="PS51449">
    <property type="entry name" value="MTTASE_N"/>
    <property type="match status" value="1"/>
</dbReference>
<dbReference type="PROSITE" id="PS01278">
    <property type="entry name" value="MTTASE_RADICAL"/>
    <property type="match status" value="1"/>
</dbReference>
<dbReference type="PROSITE" id="PS51918">
    <property type="entry name" value="RADICAL_SAM"/>
    <property type="match status" value="1"/>
</dbReference>
<dbReference type="PROSITE" id="PS50926">
    <property type="entry name" value="TRAM"/>
    <property type="match status" value="1"/>
</dbReference>
<organism>
    <name type="scientific">Porphyromonas gingivalis (strain ATCC BAA-308 / W83)</name>
    <dbReference type="NCBI Taxonomy" id="242619"/>
    <lineage>
        <taxon>Bacteria</taxon>
        <taxon>Pseudomonadati</taxon>
        <taxon>Bacteroidota</taxon>
        <taxon>Bacteroidia</taxon>
        <taxon>Bacteroidales</taxon>
        <taxon>Porphyromonadaceae</taxon>
        <taxon>Porphyromonas</taxon>
    </lineage>
</organism>
<gene>
    <name evidence="1" type="primary">miaB</name>
    <name type="ordered locus">PG_1012</name>
</gene>
<proteinExistence type="inferred from homology"/>
<keyword id="KW-0004">4Fe-4S</keyword>
<keyword id="KW-0963">Cytoplasm</keyword>
<keyword id="KW-0408">Iron</keyword>
<keyword id="KW-0411">Iron-sulfur</keyword>
<keyword id="KW-0479">Metal-binding</keyword>
<keyword id="KW-1185">Reference proteome</keyword>
<keyword id="KW-0949">S-adenosyl-L-methionine</keyword>
<keyword id="KW-0808">Transferase</keyword>
<keyword id="KW-0819">tRNA processing</keyword>
<comment type="function">
    <text evidence="1">Catalyzes the methylthiolation of N6-(dimethylallyl)adenosine (i(6)A), leading to the formation of 2-methylthio-N6-(dimethylallyl)adenosine (ms(2)i(6)A) at position 37 in tRNAs that read codons beginning with uridine.</text>
</comment>
<comment type="catalytic activity">
    <reaction evidence="1">
        <text>N(6)-dimethylallyladenosine(37) in tRNA + (sulfur carrier)-SH + AH2 + 2 S-adenosyl-L-methionine = 2-methylsulfanyl-N(6)-dimethylallyladenosine(37) in tRNA + (sulfur carrier)-H + 5'-deoxyadenosine + L-methionine + A + S-adenosyl-L-homocysteine + 2 H(+)</text>
        <dbReference type="Rhea" id="RHEA:37067"/>
        <dbReference type="Rhea" id="RHEA-COMP:10375"/>
        <dbReference type="Rhea" id="RHEA-COMP:10376"/>
        <dbReference type="Rhea" id="RHEA-COMP:14737"/>
        <dbReference type="Rhea" id="RHEA-COMP:14739"/>
        <dbReference type="ChEBI" id="CHEBI:13193"/>
        <dbReference type="ChEBI" id="CHEBI:15378"/>
        <dbReference type="ChEBI" id="CHEBI:17319"/>
        <dbReference type="ChEBI" id="CHEBI:17499"/>
        <dbReference type="ChEBI" id="CHEBI:29917"/>
        <dbReference type="ChEBI" id="CHEBI:57844"/>
        <dbReference type="ChEBI" id="CHEBI:57856"/>
        <dbReference type="ChEBI" id="CHEBI:59789"/>
        <dbReference type="ChEBI" id="CHEBI:64428"/>
        <dbReference type="ChEBI" id="CHEBI:74415"/>
        <dbReference type="ChEBI" id="CHEBI:74417"/>
        <dbReference type="EC" id="2.8.4.3"/>
    </reaction>
</comment>
<comment type="cofactor">
    <cofactor evidence="1">
        <name>[4Fe-4S] cluster</name>
        <dbReference type="ChEBI" id="CHEBI:49883"/>
    </cofactor>
    <text evidence="1">Binds 2 [4Fe-4S] clusters. One cluster is coordinated with 3 cysteines and an exchangeable S-adenosyl-L-methionine.</text>
</comment>
<comment type="subunit">
    <text evidence="1">Monomer.</text>
</comment>
<comment type="subcellular location">
    <subcellularLocation>
        <location evidence="1">Cytoplasm</location>
    </subcellularLocation>
</comment>
<comment type="similarity">
    <text evidence="1">Belongs to the methylthiotransferase family. MiaB subfamily.</text>
</comment>
<protein>
    <recommendedName>
        <fullName evidence="1">tRNA-2-methylthio-N(6)-dimethylallyladenosine synthase</fullName>
        <ecNumber evidence="1">2.8.4.3</ecNumber>
    </recommendedName>
    <alternativeName>
        <fullName evidence="1">(Dimethylallyl)adenosine tRNA methylthiotransferase MiaB</fullName>
    </alternativeName>
    <alternativeName>
        <fullName evidence="1">tRNA-i(6)A37 methylthiotransferase</fullName>
    </alternativeName>
</protein>